<accession>Q9MUJ6</accession>
<protein>
    <recommendedName>
        <fullName evidence="1">Photosystem I P700 chlorophyll a apoprotein A1</fullName>
        <ecNumber evidence="1">1.97.1.12</ecNumber>
    </recommendedName>
    <alternativeName>
        <fullName evidence="1">PSI-A</fullName>
    </alternativeName>
    <alternativeName>
        <fullName evidence="1">PsaA</fullName>
    </alternativeName>
</protein>
<sequence length="719" mass="79913">KIIVEKDPVRTSFEKWAQPGHFSKTLAKGPNTTTWIWNLHADAHDFDSHTNDLEDISRKIFSAHFGQLSIIFIWLSGMYFHGARFSNYEAWLSDPTHIKPSAQVVWPIVGQEILNGDVGGGFQGIQITSGFFQLWRASGITNELQLYCTAIGALIFAGLMLFAGWFHYHKAAPKLAWFQDVESMLNHHLAGLLGLGSLGWAGHQVHVSLPINQLLDSGVDPREIPLPHEFILNRDLLAQLYPSFSEGLTPFFNLEWSKYSDFLTFRGGLNPVTGGLWLTDTAHHHIAIAVLFLIAGHMYRTNWGIGHSIKEILEAHKGPFTGEGHRGLFEILTSSWHAQLAVNLAMLGSLTIIVAHHMYAMPPYPYLATDYGTQLSLFTHHMWIGGFLVVGAAAHAAIFMVRDYDPSTQYNNLLDRVIRHRDAIISHLNWVCIFLGFHSFGLYIHNDTMSALGRPQDMFSDTAIQLQPIFAQWIQNTHALAPSLTAPNATASTSLTWGGGDLVSVGGRVALLPIPLGTADFLVHHIHAFTIHVTVLILLKGVLFARSSRLIPDKANLGFRFPCDGPGRGGTCQVSAWDHVFLGLFWMYNSISVVIFHFSWKMQSDVWGSINEQGVISHITGGNFAQSATTINGWLRDFLWAQASQVIQSYGSSLSAYGLLFLGAHFVWAFSLMFLFSGRGYWQELIESILWAHNKLKVAPAIQPRALSIVQGRAVGVAH</sequence>
<organism>
    <name type="scientific">Equisetum palustre</name>
    <name type="common">Marsh horsetail</name>
    <dbReference type="NCBI Taxonomy" id="113538"/>
    <lineage>
        <taxon>Eukaryota</taxon>
        <taxon>Viridiplantae</taxon>
        <taxon>Streptophyta</taxon>
        <taxon>Embryophyta</taxon>
        <taxon>Tracheophyta</taxon>
        <taxon>Polypodiopsida</taxon>
        <taxon>Equisetidae</taxon>
        <taxon>Equisetales</taxon>
        <taxon>Equisetaceae</taxon>
        <taxon>Equisetum</taxon>
    </lineage>
</organism>
<gene>
    <name evidence="1" type="primary">psaA</name>
</gene>
<dbReference type="EC" id="1.97.1.12" evidence="1"/>
<dbReference type="EMBL" id="AF180019">
    <property type="protein sequence ID" value="AAF29820.1"/>
    <property type="molecule type" value="Genomic_DNA"/>
</dbReference>
<dbReference type="SMR" id="Q9MUJ6"/>
<dbReference type="GO" id="GO:0009535">
    <property type="term" value="C:chloroplast thylakoid membrane"/>
    <property type="evidence" value="ECO:0007669"/>
    <property type="project" value="UniProtKB-SubCell"/>
</dbReference>
<dbReference type="GO" id="GO:0009522">
    <property type="term" value="C:photosystem I"/>
    <property type="evidence" value="ECO:0007669"/>
    <property type="project" value="UniProtKB-KW"/>
</dbReference>
<dbReference type="GO" id="GO:0051539">
    <property type="term" value="F:4 iron, 4 sulfur cluster binding"/>
    <property type="evidence" value="ECO:0007669"/>
    <property type="project" value="UniProtKB-KW"/>
</dbReference>
<dbReference type="GO" id="GO:0016168">
    <property type="term" value="F:chlorophyll binding"/>
    <property type="evidence" value="ECO:0007669"/>
    <property type="project" value="UniProtKB-KW"/>
</dbReference>
<dbReference type="GO" id="GO:0046872">
    <property type="term" value="F:metal ion binding"/>
    <property type="evidence" value="ECO:0007669"/>
    <property type="project" value="UniProtKB-KW"/>
</dbReference>
<dbReference type="GO" id="GO:0016491">
    <property type="term" value="F:oxidoreductase activity"/>
    <property type="evidence" value="ECO:0007669"/>
    <property type="project" value="UniProtKB-KW"/>
</dbReference>
<dbReference type="GO" id="GO:0015979">
    <property type="term" value="P:photosynthesis"/>
    <property type="evidence" value="ECO:0007669"/>
    <property type="project" value="UniProtKB-KW"/>
</dbReference>
<dbReference type="FunFam" id="1.20.1130.10:FF:000001">
    <property type="entry name" value="Photosystem I P700 chlorophyll a apoprotein A2"/>
    <property type="match status" value="1"/>
</dbReference>
<dbReference type="Gene3D" id="1.20.1130.10">
    <property type="entry name" value="Photosystem I PsaA/PsaB"/>
    <property type="match status" value="1"/>
</dbReference>
<dbReference type="HAMAP" id="MF_00458">
    <property type="entry name" value="PSI_PsaA"/>
    <property type="match status" value="1"/>
</dbReference>
<dbReference type="InterPro" id="IPR006243">
    <property type="entry name" value="PSI_PsaA"/>
</dbReference>
<dbReference type="InterPro" id="IPR001280">
    <property type="entry name" value="PSI_PsaA/B"/>
</dbReference>
<dbReference type="InterPro" id="IPR020586">
    <property type="entry name" value="PSI_PsaA/B_CS"/>
</dbReference>
<dbReference type="InterPro" id="IPR036408">
    <property type="entry name" value="PSI_PsaA/B_sf"/>
</dbReference>
<dbReference type="NCBIfam" id="TIGR01335">
    <property type="entry name" value="psaA"/>
    <property type="match status" value="1"/>
</dbReference>
<dbReference type="PANTHER" id="PTHR30128">
    <property type="entry name" value="OUTER MEMBRANE PROTEIN, OMPA-RELATED"/>
    <property type="match status" value="1"/>
</dbReference>
<dbReference type="PANTHER" id="PTHR30128:SF19">
    <property type="entry name" value="PHOTOSYSTEM I P700 CHLOROPHYLL A APOPROTEIN A1-RELATED"/>
    <property type="match status" value="1"/>
</dbReference>
<dbReference type="Pfam" id="PF00223">
    <property type="entry name" value="PsaA_PsaB"/>
    <property type="match status" value="1"/>
</dbReference>
<dbReference type="PIRSF" id="PIRSF002905">
    <property type="entry name" value="PSI_A"/>
    <property type="match status" value="1"/>
</dbReference>
<dbReference type="PRINTS" id="PR00257">
    <property type="entry name" value="PHOTSYSPSAAB"/>
</dbReference>
<dbReference type="SUPFAM" id="SSF81558">
    <property type="entry name" value="Photosystem I subunits PsaA/PsaB"/>
    <property type="match status" value="1"/>
</dbReference>
<dbReference type="PROSITE" id="PS00419">
    <property type="entry name" value="PHOTOSYSTEM_I_PSAAB"/>
    <property type="match status" value="1"/>
</dbReference>
<reference key="1">
    <citation type="journal article" date="2000" name="Mol. Biol. Evol.">
        <title>Error, bias, and long-branch attraction in data for two chloroplast photosystem genes in seed plants.</title>
        <authorList>
            <person name="Sanderson M.J."/>
            <person name="Wojciechowski M.F."/>
            <person name="Hu J.-M."/>
            <person name="Sher Khan T."/>
            <person name="Brady S.G."/>
        </authorList>
    </citation>
    <scope>NUCLEOTIDE SEQUENCE [GENOMIC DNA]</scope>
</reference>
<comment type="function">
    <text>PsaA and PsaB bind P700, the primary electron donor of photosystem I (PSI), as well as the electron acceptors A0, A1 and FX. PSI is a plastocyanin-ferredoxin oxidoreductase, converting photonic excitation into a charge separation, which transfers an electron from the donor P700 chlorophyll pair to the spectroscopically characterized acceptors A0, A1, FX, FA and FB in turn. Oxidized P700 is reduced on the lumenal side of the thylakoid membrane by plastocyanin.</text>
</comment>
<comment type="catalytic activity">
    <reaction evidence="1">
        <text>reduced [plastocyanin] + hnu + oxidized [2Fe-2S]-[ferredoxin] = oxidized [plastocyanin] + reduced [2Fe-2S]-[ferredoxin]</text>
        <dbReference type="Rhea" id="RHEA:30407"/>
        <dbReference type="Rhea" id="RHEA-COMP:10000"/>
        <dbReference type="Rhea" id="RHEA-COMP:10001"/>
        <dbReference type="Rhea" id="RHEA-COMP:10039"/>
        <dbReference type="Rhea" id="RHEA-COMP:10040"/>
        <dbReference type="ChEBI" id="CHEBI:29036"/>
        <dbReference type="ChEBI" id="CHEBI:30212"/>
        <dbReference type="ChEBI" id="CHEBI:33737"/>
        <dbReference type="ChEBI" id="CHEBI:33738"/>
        <dbReference type="ChEBI" id="CHEBI:49552"/>
        <dbReference type="EC" id="1.97.1.12"/>
    </reaction>
</comment>
<comment type="cofactor">
    <text evidence="1">P700 is a chlorophyll a/chlorophyll a' dimer, A0 is one or more chlorophyll a, A1 is one or both phylloquinones and FX is a shared 4Fe-4S iron-sulfur center.</text>
</comment>
<comment type="subunit">
    <text evidence="1">The PsaA/B heterodimer binds the P700 chlorophyll special pair and subsequent electron acceptors. PSI consists of a core antenna complex that captures photons, and an electron transfer chain that converts photonic excitation into a charge separation. The eukaryotic PSI reaction center is composed of at least 11 subunits.</text>
</comment>
<comment type="subcellular location">
    <subcellularLocation>
        <location evidence="1">Plastid</location>
        <location evidence="1">Chloroplast thylakoid membrane</location>
        <topology evidence="1">Multi-pass membrane protein</topology>
    </subcellularLocation>
</comment>
<comment type="similarity">
    <text evidence="1">Belongs to the PsaA/PsaB family.</text>
</comment>
<keyword id="KW-0004">4Fe-4S</keyword>
<keyword id="KW-0148">Chlorophyll</keyword>
<keyword id="KW-0150">Chloroplast</keyword>
<keyword id="KW-0157">Chromophore</keyword>
<keyword id="KW-0249">Electron transport</keyword>
<keyword id="KW-0408">Iron</keyword>
<keyword id="KW-0411">Iron-sulfur</keyword>
<keyword id="KW-0460">Magnesium</keyword>
<keyword id="KW-0472">Membrane</keyword>
<keyword id="KW-0479">Metal-binding</keyword>
<keyword id="KW-0560">Oxidoreductase</keyword>
<keyword id="KW-0602">Photosynthesis</keyword>
<keyword id="KW-0603">Photosystem I</keyword>
<keyword id="KW-0934">Plastid</keyword>
<keyword id="KW-0793">Thylakoid</keyword>
<keyword id="KW-0812">Transmembrane</keyword>
<keyword id="KW-1133">Transmembrane helix</keyword>
<keyword id="KW-0813">Transport</keyword>
<geneLocation type="chloroplast"/>
<feature type="chain" id="PRO_0000088548" description="Photosystem I P700 chlorophyll a apoprotein A1">
    <location>
        <begin position="1" status="less than"/>
        <end position="719" status="greater than"/>
    </location>
</feature>
<feature type="transmembrane region" description="Helical; Name=I" evidence="1">
    <location>
        <begin position="60"/>
        <end position="83"/>
    </location>
</feature>
<feature type="transmembrane region" description="Helical; Name=II" evidence="1">
    <location>
        <begin position="146"/>
        <end position="169"/>
    </location>
</feature>
<feature type="transmembrane region" description="Helical; Name=III" evidence="1">
    <location>
        <begin position="185"/>
        <end position="209"/>
    </location>
</feature>
<feature type="transmembrane region" description="Helical; Name=IV" evidence="1">
    <location>
        <begin position="281"/>
        <end position="299"/>
    </location>
</feature>
<feature type="transmembrane region" description="Helical; Name=V" evidence="1">
    <location>
        <begin position="336"/>
        <end position="359"/>
    </location>
</feature>
<feature type="transmembrane region" description="Helical; Name=VI" evidence="1">
    <location>
        <begin position="375"/>
        <end position="401"/>
    </location>
</feature>
<feature type="transmembrane region" description="Helical; Name=VII" evidence="1">
    <location>
        <begin position="423"/>
        <end position="445"/>
    </location>
</feature>
<feature type="transmembrane region" description="Helical; Name=VIII" evidence="1">
    <location>
        <begin position="521"/>
        <end position="539"/>
    </location>
</feature>
<feature type="transmembrane region" description="Helical; Name=IX" evidence="1">
    <location>
        <begin position="579"/>
        <end position="600"/>
    </location>
</feature>
<feature type="transmembrane region" description="Helical; Name=X" evidence="1">
    <location>
        <begin position="654"/>
        <end position="676"/>
    </location>
</feature>
<feature type="transmembrane region" description="Helical; Name=XI" evidence="1">
    <location>
        <begin position="714"/>
        <end position="719" status="greater than"/>
    </location>
</feature>
<feature type="binding site" evidence="1">
    <location>
        <position position="563"/>
    </location>
    <ligand>
        <name>[4Fe-4S] cluster</name>
        <dbReference type="ChEBI" id="CHEBI:49883"/>
        <note>ligand shared between dimeric partners</note>
    </ligand>
</feature>
<feature type="binding site" evidence="1">
    <location>
        <position position="572"/>
    </location>
    <ligand>
        <name>[4Fe-4S] cluster</name>
        <dbReference type="ChEBI" id="CHEBI:49883"/>
        <note>ligand shared between dimeric partners</note>
    </ligand>
</feature>
<feature type="binding site" description="axial binding residue" evidence="1">
    <location>
        <position position="665"/>
    </location>
    <ligand>
        <name>chlorophyll a'</name>
        <dbReference type="ChEBI" id="CHEBI:189419"/>
        <label>A1</label>
    </ligand>
    <ligandPart>
        <name>Mg</name>
        <dbReference type="ChEBI" id="CHEBI:25107"/>
    </ligandPart>
</feature>
<feature type="binding site" description="axial binding residue" evidence="1">
    <location>
        <position position="673"/>
    </location>
    <ligand>
        <name>chlorophyll a</name>
        <dbReference type="ChEBI" id="CHEBI:58416"/>
        <label>A3</label>
    </ligand>
    <ligandPart>
        <name>Mg</name>
        <dbReference type="ChEBI" id="CHEBI:25107"/>
    </ligandPart>
</feature>
<feature type="binding site" evidence="1">
    <location>
        <position position="681"/>
    </location>
    <ligand>
        <name>chlorophyll a</name>
        <dbReference type="ChEBI" id="CHEBI:58416"/>
        <label>A3</label>
    </ligand>
</feature>
<feature type="binding site" evidence="1">
    <location>
        <position position="682"/>
    </location>
    <ligand>
        <name>phylloquinone</name>
        <dbReference type="ChEBI" id="CHEBI:18067"/>
        <label>A</label>
    </ligand>
</feature>
<feature type="non-terminal residue">
    <location>
        <position position="1"/>
    </location>
</feature>
<feature type="non-terminal residue">
    <location>
        <position position="719"/>
    </location>
</feature>
<name>PSAA_EQUPA</name>
<evidence type="ECO:0000255" key="1">
    <source>
        <dbReference type="HAMAP-Rule" id="MF_00458"/>
    </source>
</evidence>
<proteinExistence type="inferred from homology"/>